<comment type="function">
    <text evidence="1">Binds to actin and affects the structure of the cytoskeleton. At high concentrations, profilin prevents the polymerization of actin, whereas it enhances it at low concentrations (By similarity).</text>
</comment>
<comment type="subunit">
    <text evidence="1">Occurs in many kinds of cells as a complex with monomeric actin in a 1:1 ratio.</text>
</comment>
<comment type="subcellular location">
    <subcellularLocation>
        <location evidence="1">Cytoplasm</location>
        <location evidence="1">Cytoskeleton</location>
    </subcellularLocation>
</comment>
<comment type="PTM">
    <text evidence="1">Phosphorylated by MAP kinases.</text>
</comment>
<comment type="polymorphism">
    <text>Several isoforms of the allergen exist due to polymorphism.</text>
</comment>
<comment type="allergen">
    <text>Causes an allergic reaction in human.</text>
</comment>
<comment type="miscellaneous">
    <text evidence="3">The variability of the residues taking part of IgE-binding epitopes might be responsible of the difference in cross-reactivity among olive pollen cultivars, and between distantly related pollen species, leading to a variable range of allergy reactions among atopic patients.</text>
</comment>
<comment type="similarity">
    <text evidence="2">Belongs to the profilin family.</text>
</comment>
<sequence>MSWQAYVDEHLMCEIEGHHLASAAILGHDGTVWAQSADFPQFKPEEITGIMKDFDEPGHLAPTGMFVATAKYMVIQGEPGAVIRGKKGAGGITIKKTGQALVVGIYDEPMTPGQCNMVVERLGDYLLKQGL</sequence>
<organism>
    <name type="scientific">Phleum pratense</name>
    <name type="common">Common timothy</name>
    <dbReference type="NCBI Taxonomy" id="15957"/>
    <lineage>
        <taxon>Eukaryota</taxon>
        <taxon>Viridiplantae</taxon>
        <taxon>Streptophyta</taxon>
        <taxon>Embryophyta</taxon>
        <taxon>Tracheophyta</taxon>
        <taxon>Spermatophyta</taxon>
        <taxon>Magnoliopsida</taxon>
        <taxon>Liliopsida</taxon>
        <taxon>Poales</taxon>
        <taxon>Poaceae</taxon>
        <taxon>BOP clade</taxon>
        <taxon>Pooideae</taxon>
        <taxon>Poodae</taxon>
        <taxon>Poeae</taxon>
        <taxon>Poeae Chloroplast Group 2 (Poeae type)</taxon>
        <taxon>Poodinae</taxon>
        <taxon>Phleinae</taxon>
        <taxon>Phleum</taxon>
    </lineage>
</organism>
<accession>A4KA31</accession>
<keyword id="KW-0009">Actin-binding</keyword>
<keyword id="KW-0020">Allergen</keyword>
<keyword id="KW-0963">Cytoplasm</keyword>
<keyword id="KW-0206">Cytoskeleton</keyword>
<keyword id="KW-1015">Disulfide bond</keyword>
<keyword id="KW-0597">Phosphoprotein</keyword>
<reference key="1">
    <citation type="journal article" date="2012" name="PLoS ONE">
        <title>Characterization of profilin polymorphism in pollen with a focus on multifunctionality.</title>
        <authorList>
            <person name="Jimenez-Lopez J.C."/>
            <person name="Morales S."/>
            <person name="Castro A.J."/>
            <person name="Volkmann D."/>
            <person name="Rodriguez-Garcia M.I."/>
            <person name="Alche Jde D."/>
        </authorList>
    </citation>
    <scope>NUCLEOTIDE SEQUENCE [MRNA]</scope>
    <scope>POLYMORPHISM</scope>
    <source>
        <strain>cv. Pratense</strain>
    </source>
</reference>
<reference key="2">
    <citation type="journal article" date="2013" name="PLoS ONE">
        <title>Analysis of the effects of polymorphism on pollen profilin structural functionality and the generation of conformational, T- and B-cell epitopes.</title>
        <authorList>
            <person name="Jimenez-Lopez J.C."/>
            <person name="Rodriguez-Garcia M.I."/>
            <person name="Alche J.D."/>
        </authorList>
    </citation>
    <scope>3D-STRUCTURE MODELING</scope>
    <scope>DISULFIDE BOND</scope>
</reference>
<protein>
    <recommendedName>
        <fullName>Profilin-4</fullName>
    </recommendedName>
    <alternativeName>
        <fullName>Pollen allergen Phl p 12</fullName>
    </alternativeName>
    <alternativeName>
        <fullName>pollen profilin variant 1</fullName>
    </alternativeName>
    <alternativeName>
        <fullName>pollen profilin variant 5</fullName>
    </alternativeName>
    <allergenName>Phl p 12</allergenName>
</protein>
<proteinExistence type="evidence at protein level"/>
<evidence type="ECO:0000250" key="1"/>
<evidence type="ECO:0000305" key="2"/>
<evidence type="ECO:0000305" key="3">
    <source>
    </source>
</evidence>
<dbReference type="EMBL" id="DQ663535">
    <property type="protein sequence ID" value="ABG81288.1"/>
    <property type="molecule type" value="mRNA"/>
</dbReference>
<dbReference type="EMBL" id="DQ663539">
    <property type="protein sequence ID" value="ABG81292.1"/>
    <property type="molecule type" value="mRNA"/>
</dbReference>
<dbReference type="SMR" id="A4KA31"/>
<dbReference type="Allergome" id="553">
    <property type="allergen name" value="Phl p 12"/>
</dbReference>
<dbReference type="GO" id="GO:0005938">
    <property type="term" value="C:cell cortex"/>
    <property type="evidence" value="ECO:0007669"/>
    <property type="project" value="TreeGrafter"/>
</dbReference>
<dbReference type="GO" id="GO:0005856">
    <property type="term" value="C:cytoskeleton"/>
    <property type="evidence" value="ECO:0007669"/>
    <property type="project" value="UniProtKB-SubCell"/>
</dbReference>
<dbReference type="GO" id="GO:0003785">
    <property type="term" value="F:actin monomer binding"/>
    <property type="evidence" value="ECO:0007669"/>
    <property type="project" value="TreeGrafter"/>
</dbReference>
<dbReference type="CDD" id="cd00148">
    <property type="entry name" value="PROF"/>
    <property type="match status" value="1"/>
</dbReference>
<dbReference type="FunFam" id="3.30.450.30:FF:000001">
    <property type="entry name" value="Profilin"/>
    <property type="match status" value="1"/>
</dbReference>
<dbReference type="Gene3D" id="3.30.450.30">
    <property type="entry name" value="Dynein light chain 2a, cytoplasmic"/>
    <property type="match status" value="1"/>
</dbReference>
<dbReference type="InterPro" id="IPR048278">
    <property type="entry name" value="PFN"/>
</dbReference>
<dbReference type="InterPro" id="IPR005455">
    <property type="entry name" value="PFN_euk"/>
</dbReference>
<dbReference type="InterPro" id="IPR036140">
    <property type="entry name" value="PFN_sf"/>
</dbReference>
<dbReference type="InterPro" id="IPR027310">
    <property type="entry name" value="Profilin_CS"/>
</dbReference>
<dbReference type="PANTHER" id="PTHR11604">
    <property type="entry name" value="PROFILIN"/>
    <property type="match status" value="1"/>
</dbReference>
<dbReference type="PANTHER" id="PTHR11604:SF31">
    <property type="entry name" value="PROFILIN"/>
    <property type="match status" value="1"/>
</dbReference>
<dbReference type="Pfam" id="PF00235">
    <property type="entry name" value="Profilin"/>
    <property type="match status" value="1"/>
</dbReference>
<dbReference type="PRINTS" id="PR00392">
    <property type="entry name" value="PROFILIN"/>
</dbReference>
<dbReference type="PRINTS" id="PR01640">
    <property type="entry name" value="PROFILINPLNT"/>
</dbReference>
<dbReference type="SMART" id="SM00392">
    <property type="entry name" value="PROF"/>
    <property type="match status" value="1"/>
</dbReference>
<dbReference type="SUPFAM" id="SSF55770">
    <property type="entry name" value="Profilin (actin-binding protein)"/>
    <property type="match status" value="1"/>
</dbReference>
<dbReference type="PROSITE" id="PS00414">
    <property type="entry name" value="PROFILIN"/>
    <property type="match status" value="1"/>
</dbReference>
<name>PROF4_PHLPR</name>
<feature type="initiator methionine" description="Removed" evidence="1">
    <location>
        <position position="1"/>
    </location>
</feature>
<feature type="chain" id="PRO_0000425058" description="Profilin-4">
    <location>
        <begin position="2"/>
        <end position="131"/>
    </location>
</feature>
<feature type="short sequence motif" description="Involved in PIP2 interaction">
    <location>
        <begin position="81"/>
        <end position="97"/>
    </location>
</feature>
<feature type="modified residue" description="Phosphothreonine" evidence="1">
    <location>
        <position position="111"/>
    </location>
</feature>
<feature type="disulfide bond" evidence="3">
    <location>
        <begin position="13"/>
        <end position="115"/>
    </location>
</feature>